<organism>
    <name type="scientific">Caulobacter vibrioides (strain ATCC 19089 / CIP 103742 / CB 15)</name>
    <name type="common">Caulobacter crescentus</name>
    <dbReference type="NCBI Taxonomy" id="190650"/>
    <lineage>
        <taxon>Bacteria</taxon>
        <taxon>Pseudomonadati</taxon>
        <taxon>Pseudomonadota</taxon>
        <taxon>Alphaproteobacteria</taxon>
        <taxon>Caulobacterales</taxon>
        <taxon>Caulobacteraceae</taxon>
        <taxon>Caulobacter</taxon>
    </lineage>
</organism>
<gene>
    <name type="ordered locus">CC_0673</name>
</gene>
<keyword id="KW-1003">Cell membrane</keyword>
<keyword id="KW-0472">Membrane</keyword>
<keyword id="KW-1185">Reference proteome</keyword>
<keyword id="KW-0812">Transmembrane</keyword>
<keyword id="KW-1133">Transmembrane helix</keyword>
<proteinExistence type="inferred from homology"/>
<accession>Q9AAC9</accession>
<protein>
    <recommendedName>
        <fullName evidence="1">UPF0391 membrane protein CC_0673</fullName>
    </recommendedName>
</protein>
<evidence type="ECO:0000255" key="1">
    <source>
        <dbReference type="HAMAP-Rule" id="MF_01361"/>
    </source>
</evidence>
<reference key="1">
    <citation type="journal article" date="2001" name="Proc. Natl. Acad. Sci. U.S.A.">
        <title>Complete genome sequence of Caulobacter crescentus.</title>
        <authorList>
            <person name="Nierman W.C."/>
            <person name="Feldblyum T.V."/>
            <person name="Laub M.T."/>
            <person name="Paulsen I.T."/>
            <person name="Nelson K.E."/>
            <person name="Eisen J.A."/>
            <person name="Heidelberg J.F."/>
            <person name="Alley M.R.K."/>
            <person name="Ohta N."/>
            <person name="Maddock J.R."/>
            <person name="Potocka I."/>
            <person name="Nelson W.C."/>
            <person name="Newton A."/>
            <person name="Stephens C."/>
            <person name="Phadke N.D."/>
            <person name="Ely B."/>
            <person name="DeBoy R.T."/>
            <person name="Dodson R.J."/>
            <person name="Durkin A.S."/>
            <person name="Gwinn M.L."/>
            <person name="Haft D.H."/>
            <person name="Kolonay J.F."/>
            <person name="Smit J."/>
            <person name="Craven M.B."/>
            <person name="Khouri H.M."/>
            <person name="Shetty J."/>
            <person name="Berry K.J."/>
            <person name="Utterback T.R."/>
            <person name="Tran K."/>
            <person name="Wolf A.M."/>
            <person name="Vamathevan J.J."/>
            <person name="Ermolaeva M.D."/>
            <person name="White O."/>
            <person name="Salzberg S.L."/>
            <person name="Venter J.C."/>
            <person name="Shapiro L."/>
            <person name="Fraser C.M."/>
        </authorList>
    </citation>
    <scope>NUCLEOTIDE SEQUENCE [LARGE SCALE GENOMIC DNA]</scope>
    <source>
        <strain>ATCC 19089 / CIP 103742 / CB 15</strain>
    </source>
</reference>
<feature type="chain" id="PRO_0000256729" description="UPF0391 membrane protein CC_0673">
    <location>
        <begin position="1"/>
        <end position="60"/>
    </location>
</feature>
<feature type="transmembrane region" description="Helical" evidence="1">
    <location>
        <begin position="4"/>
        <end position="24"/>
    </location>
</feature>
<feature type="transmembrane region" description="Helical" evidence="1">
    <location>
        <begin position="33"/>
        <end position="53"/>
    </location>
</feature>
<comment type="subcellular location">
    <subcellularLocation>
        <location evidence="1">Cell membrane</location>
        <topology evidence="1">Multi-pass membrane protein</topology>
    </subcellularLocation>
</comment>
<comment type="similarity">
    <text evidence="1">Belongs to the UPF0391 family.</text>
</comment>
<sequence>MLKWAIILAIVALIAGALGFSGLAGAAAGVAKILFFLFLVGFVLVLLLGGTVFKAATGPK</sequence>
<dbReference type="EMBL" id="AE005673">
    <property type="protein sequence ID" value="AAK22658.1"/>
    <property type="molecule type" value="Genomic_DNA"/>
</dbReference>
<dbReference type="PIR" id="F87332">
    <property type="entry name" value="F87332"/>
</dbReference>
<dbReference type="RefSeq" id="NP_419490.1">
    <property type="nucleotide sequence ID" value="NC_002696.2"/>
</dbReference>
<dbReference type="RefSeq" id="WP_010918559.1">
    <property type="nucleotide sequence ID" value="NC_002696.2"/>
</dbReference>
<dbReference type="STRING" id="190650.CC_0673"/>
<dbReference type="EnsemblBacteria" id="AAK22658">
    <property type="protein sequence ID" value="AAK22658"/>
    <property type="gene ID" value="CC_0673"/>
</dbReference>
<dbReference type="KEGG" id="ccr:CC_0673"/>
<dbReference type="PATRIC" id="fig|190650.5.peg.683"/>
<dbReference type="eggNOG" id="COG5487">
    <property type="taxonomic scope" value="Bacteria"/>
</dbReference>
<dbReference type="HOGENOM" id="CLU_187346_1_0_5"/>
<dbReference type="BioCyc" id="CAULO:CC0673-MONOMER"/>
<dbReference type="Proteomes" id="UP000001816">
    <property type="component" value="Chromosome"/>
</dbReference>
<dbReference type="GO" id="GO:0005886">
    <property type="term" value="C:plasma membrane"/>
    <property type="evidence" value="ECO:0007669"/>
    <property type="project" value="UniProtKB-SubCell"/>
</dbReference>
<dbReference type="HAMAP" id="MF_01361">
    <property type="entry name" value="UPF0391"/>
    <property type="match status" value="1"/>
</dbReference>
<dbReference type="InterPro" id="IPR009760">
    <property type="entry name" value="DUF1328"/>
</dbReference>
<dbReference type="Pfam" id="PF07043">
    <property type="entry name" value="DUF1328"/>
    <property type="match status" value="1"/>
</dbReference>
<dbReference type="PIRSF" id="PIRSF036466">
    <property type="entry name" value="UCP036466"/>
    <property type="match status" value="1"/>
</dbReference>
<name>Y673_CAUVC</name>